<keyword id="KW-0002">3D-structure</keyword>
<keyword id="KW-0004">4Fe-4S</keyword>
<keyword id="KW-1035">Host cytoplasm</keyword>
<keyword id="KW-0408">Iron</keyword>
<keyword id="KW-0411">Iron-sulfur</keyword>
<keyword id="KW-0426">Late protein</keyword>
<keyword id="KW-0479">Metal-binding</keyword>
<keyword id="KW-1185">Reference proteome</keyword>
<keyword id="KW-1171">Viral genome ejection through host cell envelope</keyword>
<keyword id="KW-1243">Viral long flexible tail ejection system</keyword>
<keyword id="KW-1162">Viral penetration into host cytoplasm</keyword>
<keyword id="KW-1188">Viral release from host cell</keyword>
<keyword id="KW-1245">Viral tail assembly</keyword>
<keyword id="KW-1227">Viral tail protein</keyword>
<keyword id="KW-0946">Virion</keyword>
<keyword id="KW-1160">Virus entry into host cell</keyword>
<dbReference type="EMBL" id="J02459">
    <property type="protein sequence ID" value="AAA96550.1"/>
    <property type="molecule type" value="Genomic_DNA"/>
</dbReference>
<dbReference type="PIR" id="A43009">
    <property type="entry name" value="TLBPLL"/>
</dbReference>
<dbReference type="RefSeq" id="NP_040597.1">
    <property type="nucleotide sequence ID" value="NC_001416.1"/>
</dbReference>
<dbReference type="PDB" id="8IYK">
    <property type="method" value="EM"/>
    <property type="resolution" value="2.95 A"/>
    <property type="chains" value="L/N/f=1-232"/>
</dbReference>
<dbReference type="PDB" id="8IYL">
    <property type="method" value="EM"/>
    <property type="resolution" value="3.00 A"/>
    <property type="chains" value="G/L/d=1-232"/>
</dbReference>
<dbReference type="PDB" id="8K35">
    <property type="method" value="EM"/>
    <property type="resolution" value="3.44 A"/>
    <property type="chains" value="G/J/N=1-232"/>
</dbReference>
<dbReference type="PDB" id="8XCG">
    <property type="method" value="EM"/>
    <property type="resolution" value="3.46 A"/>
    <property type="chains" value="L/N/f=1-232"/>
</dbReference>
<dbReference type="PDBsum" id="8IYK"/>
<dbReference type="PDBsum" id="8IYL"/>
<dbReference type="PDBsum" id="8K35"/>
<dbReference type="PDBsum" id="8XCG"/>
<dbReference type="EMDB" id="EMD-35824"/>
<dbReference type="EMDB" id="EMD-35825"/>
<dbReference type="EMDB" id="EMD-36844"/>
<dbReference type="EMDB" id="EMD-38242"/>
<dbReference type="SMR" id="P03738"/>
<dbReference type="IntAct" id="P03738">
    <property type="interactions" value="1"/>
</dbReference>
<dbReference type="GeneID" id="2703513"/>
<dbReference type="KEGG" id="vg:2703513"/>
<dbReference type="Proteomes" id="UP000001711">
    <property type="component" value="Genome"/>
</dbReference>
<dbReference type="GO" id="GO:0030430">
    <property type="term" value="C:host cell cytoplasm"/>
    <property type="evidence" value="ECO:0007669"/>
    <property type="project" value="UniProtKB-SubCell"/>
</dbReference>
<dbReference type="GO" id="GO:0098015">
    <property type="term" value="C:virus tail"/>
    <property type="evidence" value="ECO:0007669"/>
    <property type="project" value="UniProtKB-KW"/>
</dbReference>
<dbReference type="GO" id="GO:0051539">
    <property type="term" value="F:4 iron, 4 sulfur cluster binding"/>
    <property type="evidence" value="ECO:0007669"/>
    <property type="project" value="UniProtKB-KW"/>
</dbReference>
<dbReference type="GO" id="GO:0046872">
    <property type="term" value="F:metal ion binding"/>
    <property type="evidence" value="ECO:0007669"/>
    <property type="project" value="UniProtKB-KW"/>
</dbReference>
<dbReference type="GO" id="GO:0099001">
    <property type="term" value="P:symbiont genome ejection through host cell envelope, long flexible tail mechanism"/>
    <property type="evidence" value="ECO:0007669"/>
    <property type="project" value="UniProtKB-KW"/>
</dbReference>
<dbReference type="GO" id="GO:0098003">
    <property type="term" value="P:viral tail assembly"/>
    <property type="evidence" value="ECO:0000315"/>
    <property type="project" value="UniProtKB"/>
</dbReference>
<dbReference type="InterPro" id="IPR006487">
    <property type="entry name" value="Phage_lambda_L"/>
</dbReference>
<dbReference type="NCBIfam" id="TIGR01600">
    <property type="entry name" value="phage_tail_L"/>
    <property type="match status" value="1"/>
</dbReference>
<dbReference type="Pfam" id="PF05100">
    <property type="entry name" value="Phage_tail_L"/>
    <property type="match status" value="1"/>
</dbReference>
<feature type="chain" id="PRO_0000077667" description="Tail tip protein L">
    <location>
        <begin position="1"/>
        <end position="232"/>
    </location>
</feature>
<feature type="binding site" evidence="1">
    <location>
        <position position="173"/>
    </location>
    <ligand>
        <name>[4Fe-4S] cluster</name>
        <dbReference type="ChEBI" id="CHEBI:49883"/>
    </ligand>
</feature>
<feature type="binding site" evidence="1">
    <location>
        <position position="182"/>
    </location>
    <ligand>
        <name>[4Fe-4S] cluster</name>
        <dbReference type="ChEBI" id="CHEBI:49883"/>
    </ligand>
</feature>
<feature type="binding site" evidence="1">
    <location>
        <position position="205"/>
    </location>
    <ligand>
        <name>[4Fe-4S] cluster</name>
        <dbReference type="ChEBI" id="CHEBI:49883"/>
    </ligand>
</feature>
<feature type="binding site" evidence="1">
    <location>
        <position position="212"/>
    </location>
    <ligand>
        <name>[4Fe-4S] cluster</name>
        <dbReference type="ChEBI" id="CHEBI:49883"/>
    </ligand>
</feature>
<feature type="mutagenesis site" description="Complete loss of tail assembly." evidence="3">
    <original>C</original>
    <variation>S</variation>
    <location>
        <position position="173"/>
    </location>
</feature>
<feature type="mutagenesis site" description="Complete loss of tail assembly." evidence="3">
    <original>C</original>
    <variation>S</variation>
    <location>
        <position position="182"/>
    </location>
</feature>
<feature type="mutagenesis site" description="Complete loss of tail assembly." evidence="3">
    <original>C</original>
    <variation>S</variation>
    <location>
        <position position="205"/>
    </location>
</feature>
<feature type="mutagenesis site" description="96% loss of tail assembly." evidence="3">
    <original>C</original>
    <variation>S</variation>
    <location>
        <position position="212"/>
    </location>
</feature>
<feature type="helix" evidence="5">
    <location>
        <begin position="6"/>
        <end position="13"/>
    </location>
</feature>
<feature type="strand" evidence="5">
    <location>
        <begin position="20"/>
        <end position="27"/>
    </location>
</feature>
<feature type="turn" evidence="5">
    <location>
        <begin position="29"/>
        <end position="32"/>
    </location>
</feature>
<feature type="strand" evidence="5">
    <location>
        <begin position="36"/>
        <end position="40"/>
    </location>
</feature>
<feature type="strand" evidence="5">
    <location>
        <begin position="49"/>
        <end position="51"/>
    </location>
</feature>
<feature type="strand" evidence="5">
    <location>
        <begin position="54"/>
        <end position="58"/>
    </location>
</feature>
<feature type="strand" evidence="5">
    <location>
        <begin position="61"/>
        <end position="64"/>
    </location>
</feature>
<feature type="strand" evidence="5">
    <location>
        <begin position="67"/>
        <end position="71"/>
    </location>
</feature>
<feature type="strand" evidence="5">
    <location>
        <begin position="78"/>
        <end position="82"/>
    </location>
</feature>
<feature type="helix" evidence="5">
    <location>
        <begin position="84"/>
        <end position="86"/>
    </location>
</feature>
<feature type="helix" evidence="5">
    <location>
        <begin position="87"/>
        <end position="92"/>
    </location>
</feature>
<feature type="strand" evidence="5">
    <location>
        <begin position="93"/>
        <end position="98"/>
    </location>
</feature>
<feature type="strand" evidence="5">
    <location>
        <begin position="102"/>
        <end position="109"/>
    </location>
</feature>
<feature type="helix" evidence="5">
    <location>
        <begin position="110"/>
        <end position="112"/>
    </location>
</feature>
<feature type="helix" evidence="5">
    <location>
        <begin position="115"/>
        <end position="117"/>
    </location>
</feature>
<feature type="strand" evidence="5">
    <location>
        <begin position="131"/>
        <end position="143"/>
    </location>
</feature>
<feature type="strand" evidence="5">
    <location>
        <begin position="145"/>
        <end position="153"/>
    </location>
</feature>
<feature type="strand" evidence="5">
    <location>
        <begin position="157"/>
        <end position="160"/>
    </location>
</feature>
<feature type="strand" evidence="5">
    <location>
        <begin position="162"/>
        <end position="164"/>
    </location>
</feature>
<feature type="strand" evidence="5">
    <location>
        <begin position="179"/>
        <end position="182"/>
    </location>
</feature>
<feature type="turn" evidence="5">
    <location>
        <begin position="200"/>
        <end position="202"/>
    </location>
</feature>
<feature type="helix" evidence="5">
    <location>
        <begin position="209"/>
        <end position="214"/>
    </location>
</feature>
<feature type="helix" evidence="5">
    <location>
        <begin position="218"/>
        <end position="220"/>
    </location>
</feature>
<organism>
    <name type="scientific">Escherichia phage lambda</name>
    <name type="common">Bacteriophage lambda</name>
    <dbReference type="NCBI Taxonomy" id="2681611"/>
    <lineage>
        <taxon>Viruses</taxon>
        <taxon>Duplodnaviria</taxon>
        <taxon>Heunggongvirae</taxon>
        <taxon>Uroviricota</taxon>
        <taxon>Caudoviricetes</taxon>
        <taxon>Lambdavirus</taxon>
        <taxon>Lambdavirus lambda</taxon>
    </lineage>
</organism>
<name>TIPL_LAMBD</name>
<proteinExistence type="evidence at protein level"/>
<organismHost>
    <name type="scientific">Escherichia coli</name>
    <dbReference type="NCBI Taxonomy" id="562"/>
</organismHost>
<sequence length="232" mass="25710">MQDIRQETLNECTRAEQSASVVLWEIDLTEVGGERYFFCNEQNEKGEPVTWQGRQYQPYPIQGSGFELNGKGTSTRPTLTVSNLYGMVTGMAEDMQSLVGGTVVRRKVYARFLDAVNFVNGNSYADPEQEVISRWRIEQCSELSAVSASFVLSTPTETDGAVFPGRIMLANTCTWTYRGDECGYSGPAVADEYDQPTSDITKDKCSKCLSGCKFRNNVGNFGGFLSINKLSQ</sequence>
<protein>
    <recommendedName>
        <fullName>Tail tip protein L</fullName>
    </recommendedName>
</protein>
<evidence type="ECO:0000250" key="1">
    <source>
        <dbReference type="UniProtKB" id="O64332"/>
    </source>
</evidence>
<evidence type="ECO:0000269" key="2">
    <source>
    </source>
</evidence>
<evidence type="ECO:0000269" key="3">
    <source>
    </source>
</evidence>
<evidence type="ECO:0000305" key="4"/>
<evidence type="ECO:0007829" key="5">
    <source>
        <dbReference type="PDB" id="8XCG"/>
    </source>
</evidence>
<accession>P03738</accession>
<gene>
    <name type="primary">L</name>
    <name type="ordered locus">lambdap18</name>
</gene>
<comment type="function">
    <text evidence="2 3">Part of the distal tail tip complex which plays a role in DNA ejection during entry, and in tail assembly initiation during exit. The tail tip complex is assembled successively with three tail tip proteins J, one tail tip protein I, one tail tip protein L and one tail tip protein K. The tail tip complex interacts with tail measure protein to initiate tail tube assembly. The formation of the tail tip complex is completed by the addition of tail tip protein M, which is followed by tail tube polymerization.</text>
</comment>
<comment type="cofactor">
    <cofactor evidence="1">
        <name>[4Fe-4S] cluster</name>
        <dbReference type="ChEBI" id="CHEBI:49883"/>
    </cofactor>
    <text>Binds 1 [4Fe-4S] cluster.</text>
</comment>
<comment type="subcellular location">
    <subcellularLocation>
        <location>Virion</location>
    </subcellularLocation>
    <subcellularLocation>
        <location>Host cytoplasm</location>
    </subcellularLocation>
</comment>
<comment type="domain">
    <text evidence="1">The C-terminus coordinates an iron-sulfur cluster.</text>
</comment>
<comment type="similarity">
    <text evidence="4">Belongs to the lambda-like tail tip protein L family.</text>
</comment>
<reference key="1">
    <citation type="journal article" date="1982" name="J. Mol. Biol.">
        <title>Nucleotide sequence of bacteriophage lambda DNA.</title>
        <authorList>
            <person name="Sanger F."/>
            <person name="Coulson A.R."/>
            <person name="Hong G.F."/>
            <person name="Hill D.F."/>
            <person name="Petersen G.B."/>
        </authorList>
    </citation>
    <scope>NUCLEOTIDE SEQUENCE [LARGE SCALE GENOMIC DNA]</scope>
</reference>
<reference key="2">
    <citation type="journal article" date="1976" name="J. Mol. Biol.">
        <title>Morphogenesis of bacteriophage lambda tail. Polymorphism in the assembly of the major tail protein.</title>
        <authorList>
            <person name="Katsura I."/>
        </authorList>
    </citation>
    <scope>FUNCTION</scope>
</reference>
<reference key="3">
    <citation type="journal article" date="2013" name="J. Mol. Biol.">
        <title>Tail tip proteins related to bacteriophage lambda gpL coordinate an iron-sulfur cluster.</title>
        <authorList>
            <person name="Tam W."/>
            <person name="Pell L.G."/>
            <person name="Bona D."/>
            <person name="Tsai A."/>
            <person name="Dai X.X."/>
            <person name="Edwards A.M."/>
            <person name="Hendrix R.W."/>
            <person name="Maxwell K.L."/>
            <person name="Davidson A.R."/>
        </authorList>
    </citation>
    <scope>FUNCTION</scope>
    <scope>MUTAGENESIS OF CYS-173; CYS-182; CYS-205 AND CYS-212</scope>
</reference>